<evidence type="ECO:0000255" key="1">
    <source>
        <dbReference type="HAMAP-Rule" id="MF_00440"/>
    </source>
</evidence>
<proteinExistence type="inferred from homology"/>
<comment type="function">
    <text evidence="1">Negatively regulates transcription of bacterial ribonucleotide reductase nrd genes and operons by binding to NrdR-boxes.</text>
</comment>
<comment type="cofactor">
    <cofactor evidence="1">
        <name>Zn(2+)</name>
        <dbReference type="ChEBI" id="CHEBI:29105"/>
    </cofactor>
    <text evidence="1">Binds 1 zinc ion.</text>
</comment>
<comment type="similarity">
    <text evidence="1">Belongs to the NrdR family.</text>
</comment>
<reference key="1">
    <citation type="journal article" date="2007" name="Microbiology">
        <title>Comparative analysis of the Corynebacterium glutamicum group and complete genome sequence of strain R.</title>
        <authorList>
            <person name="Yukawa H."/>
            <person name="Omumasaba C.A."/>
            <person name="Nonaka H."/>
            <person name="Kos P."/>
            <person name="Okai N."/>
            <person name="Suzuki N."/>
            <person name="Suda M."/>
            <person name="Tsuge Y."/>
            <person name="Watanabe J."/>
            <person name="Ikeda Y."/>
            <person name="Vertes A.A."/>
            <person name="Inui M."/>
        </authorList>
    </citation>
    <scope>NUCLEOTIDE SEQUENCE [LARGE SCALE GENOMIC DNA]</scope>
    <source>
        <strain>R</strain>
    </source>
</reference>
<organism>
    <name type="scientific">Corynebacterium glutamicum (strain R)</name>
    <dbReference type="NCBI Taxonomy" id="340322"/>
    <lineage>
        <taxon>Bacteria</taxon>
        <taxon>Bacillati</taxon>
        <taxon>Actinomycetota</taxon>
        <taxon>Actinomycetes</taxon>
        <taxon>Mycobacteriales</taxon>
        <taxon>Corynebacteriaceae</taxon>
        <taxon>Corynebacterium</taxon>
    </lineage>
</organism>
<gene>
    <name evidence="1" type="primary">nrdR</name>
    <name type="ordered locus">cgR_1758</name>
</gene>
<dbReference type="EMBL" id="AP009044">
    <property type="protein sequence ID" value="BAF54752.1"/>
    <property type="molecule type" value="Genomic_DNA"/>
</dbReference>
<dbReference type="RefSeq" id="WP_003857385.1">
    <property type="nucleotide sequence ID" value="NC_009342.1"/>
</dbReference>
<dbReference type="SMR" id="A4QET6"/>
<dbReference type="GeneID" id="1019885"/>
<dbReference type="KEGG" id="cgt:cgR_1758"/>
<dbReference type="HOGENOM" id="CLU_108412_1_0_11"/>
<dbReference type="PhylomeDB" id="A4QET6"/>
<dbReference type="Proteomes" id="UP000006698">
    <property type="component" value="Chromosome"/>
</dbReference>
<dbReference type="GO" id="GO:0005524">
    <property type="term" value="F:ATP binding"/>
    <property type="evidence" value="ECO:0007669"/>
    <property type="project" value="UniProtKB-KW"/>
</dbReference>
<dbReference type="GO" id="GO:0003677">
    <property type="term" value="F:DNA binding"/>
    <property type="evidence" value="ECO:0007669"/>
    <property type="project" value="UniProtKB-KW"/>
</dbReference>
<dbReference type="GO" id="GO:0008270">
    <property type="term" value="F:zinc ion binding"/>
    <property type="evidence" value="ECO:0007669"/>
    <property type="project" value="UniProtKB-UniRule"/>
</dbReference>
<dbReference type="GO" id="GO:0045892">
    <property type="term" value="P:negative regulation of DNA-templated transcription"/>
    <property type="evidence" value="ECO:0007669"/>
    <property type="project" value="UniProtKB-UniRule"/>
</dbReference>
<dbReference type="HAMAP" id="MF_00440">
    <property type="entry name" value="NrdR"/>
    <property type="match status" value="1"/>
</dbReference>
<dbReference type="InterPro" id="IPR005144">
    <property type="entry name" value="ATP-cone_dom"/>
</dbReference>
<dbReference type="InterPro" id="IPR055173">
    <property type="entry name" value="NrdR-like_N"/>
</dbReference>
<dbReference type="InterPro" id="IPR003796">
    <property type="entry name" value="RNR_NrdR-like"/>
</dbReference>
<dbReference type="NCBIfam" id="TIGR00244">
    <property type="entry name" value="transcriptional regulator NrdR"/>
    <property type="match status" value="1"/>
</dbReference>
<dbReference type="PANTHER" id="PTHR30455">
    <property type="entry name" value="TRANSCRIPTIONAL REPRESSOR NRDR"/>
    <property type="match status" value="1"/>
</dbReference>
<dbReference type="PANTHER" id="PTHR30455:SF2">
    <property type="entry name" value="TRANSCRIPTIONAL REPRESSOR NRDR"/>
    <property type="match status" value="1"/>
</dbReference>
<dbReference type="Pfam" id="PF03477">
    <property type="entry name" value="ATP-cone"/>
    <property type="match status" value="1"/>
</dbReference>
<dbReference type="Pfam" id="PF22811">
    <property type="entry name" value="Zn_ribbon_NrdR"/>
    <property type="match status" value="1"/>
</dbReference>
<dbReference type="PROSITE" id="PS51161">
    <property type="entry name" value="ATP_CONE"/>
    <property type="match status" value="1"/>
</dbReference>
<name>NRDR_CORGB</name>
<accession>A4QET6</accession>
<feature type="chain" id="PRO_1000080739" description="Transcriptional repressor NrdR">
    <location>
        <begin position="1"/>
        <end position="150"/>
    </location>
</feature>
<feature type="domain" description="ATP-cone" evidence="1">
    <location>
        <begin position="46"/>
        <end position="136"/>
    </location>
</feature>
<feature type="zinc finger region" evidence="1">
    <location>
        <begin position="3"/>
        <end position="34"/>
    </location>
</feature>
<protein>
    <recommendedName>
        <fullName evidence="1">Transcriptional repressor NrdR</fullName>
    </recommendedName>
</protein>
<sequence length="150" mass="17138">MYCPFCQHDHSKVIDSRVIDAGSAIRRRRECSKCEGRFTTIEKAVLLVVKRNGVTEPFSREKVVTGVRRACQGRDVSDDALKRLAQQVEETVRSNGSSQVRANDIGLAILDPLRELDEVAYLRFASVYKSFDSADDFEKEIRLMRRRGRD</sequence>
<keyword id="KW-0067">ATP-binding</keyword>
<keyword id="KW-0238">DNA-binding</keyword>
<keyword id="KW-0479">Metal-binding</keyword>
<keyword id="KW-0547">Nucleotide-binding</keyword>
<keyword id="KW-0678">Repressor</keyword>
<keyword id="KW-0804">Transcription</keyword>
<keyword id="KW-0805">Transcription regulation</keyword>
<keyword id="KW-0862">Zinc</keyword>
<keyword id="KW-0863">Zinc-finger</keyword>